<accession>P33486</accession>
<proteinExistence type="evidence at protein level"/>
<comment type="function">
    <text>Helps to release the mature phage particles from the cell wall by breaking down the peptidoglycan.</text>
</comment>
<comment type="catalytic activity">
    <reaction>
        <text>Hydrolysis of (1-&gt;4)-beta-linkages between N-acetylmuramic acid and N-acetyl-D-glucosamine residues in a peptidoglycan and between N-acetyl-D-glucosamine residues in chitodextrins.</text>
        <dbReference type="EC" id="3.2.1.17"/>
    </reaction>
</comment>
<comment type="similarity">
    <text evidence="2">Belongs to the glycosyl hydrolase 25 family.</text>
</comment>
<keyword id="KW-0929">Antimicrobial</keyword>
<keyword id="KW-0081">Bacteriolytic enzyme</keyword>
<keyword id="KW-0903">Direct protein sequencing</keyword>
<keyword id="KW-0326">Glycosidase</keyword>
<keyword id="KW-0378">Hydrolase</keyword>
<feature type="chain" id="PRO_0000208262" description="Lysozyme">
    <location>
        <begin position="1"/>
        <end position="202"/>
    </location>
</feature>
<feature type="active site" evidence="1">
    <location>
        <position position="8"/>
    </location>
</feature>
<feature type="active site" evidence="1">
    <location>
        <position position="99"/>
    </location>
</feature>
<sequence>MTKTYGVDVAVYQPIDLAAYHKAGASFAIVKLTEGVDYVNRRGPSRWTAPGLTTSTLMPTISRSFGSSVSRAKKEAAYFLKEAKKQDISKKRMLWLDWEAGSGNVVTGSKSSNTAAILDFMDAIKAAGWRPGLYSGASLMRTAIDTKQVVKKYGTCLWVASYPTMAAVSTADFGYFRQWTGSPSGSLPVTAWPGRRRERCSG</sequence>
<reference key="1">
    <citation type="journal article" date="1990" name="Gene">
        <title>Cloning, expression and sequence analysis of an endolysin-encoding gene of Lactobacillus bulgaricus bacteriophage mv1.</title>
        <authorList>
            <person name="Boizet B."/>
            <person name="Lahbib-Mansais Y."/>
            <person name="Dupont L."/>
            <person name="Ritzenthaler P."/>
            <person name="Mata M."/>
        </authorList>
    </citation>
    <scope>NUCLEOTIDE SEQUENCE [GENOMIC DNA]</scope>
    <scope>PARTIAL PROTEIN SEQUENCE</scope>
</reference>
<reference key="2">
    <citation type="submission" date="1998-12" db="EMBL/GenBank/DDBJ databases">
        <authorList>
            <person name="Boizet B."/>
            <person name="Lahbib-Mansais Y."/>
            <person name="Dupont L."/>
            <person name="Ritzenthaler P."/>
            <person name="Mata M."/>
        </authorList>
    </citation>
    <scope>SEQUENCE REVISION TO C-TERMINUS</scope>
</reference>
<protein>
    <recommendedName>
        <fullName>Lysozyme</fullName>
        <ecNumber>3.2.1.17</ecNumber>
    </recommendedName>
    <alternativeName>
        <fullName>Endolysin</fullName>
    </alternativeName>
    <alternativeName>
        <fullName>MV1 lysin</fullName>
    </alternativeName>
    <alternativeName>
        <fullName>Muramidase</fullName>
    </alternativeName>
</protein>
<organismHost>
    <name type="scientific">Lactobacillus delbrueckii</name>
    <dbReference type="NCBI Taxonomy" id="1584"/>
</organismHost>
<evidence type="ECO:0000255" key="1">
    <source>
        <dbReference type="PROSITE-ProRule" id="PRU10065"/>
    </source>
</evidence>
<evidence type="ECO:0000305" key="2"/>
<name>LYS_BPMV1</name>
<organism>
    <name type="scientific">Lactococcus phage mv1</name>
    <name type="common">Lactococcus delbrueckii bacteriophage mv1</name>
    <dbReference type="NCBI Taxonomy" id="33769"/>
    <lineage>
        <taxon>Viruses</taxon>
    </lineage>
</organism>
<dbReference type="EC" id="3.2.1.17"/>
<dbReference type="EMBL" id="M60167">
    <property type="protein sequence ID" value="AAA32264.1"/>
    <property type="molecule type" value="Genomic_DNA"/>
</dbReference>
<dbReference type="PIR" id="JQ0789">
    <property type="entry name" value="MUBPM1"/>
</dbReference>
<dbReference type="SMR" id="P33486"/>
<dbReference type="CAZy" id="GH25">
    <property type="family name" value="Glycoside Hydrolase Family 25"/>
</dbReference>
<dbReference type="GO" id="GO:0003796">
    <property type="term" value="F:lysozyme activity"/>
    <property type="evidence" value="ECO:0007669"/>
    <property type="project" value="UniProtKB-EC"/>
</dbReference>
<dbReference type="GO" id="GO:0016052">
    <property type="term" value="P:carbohydrate catabolic process"/>
    <property type="evidence" value="ECO:0007669"/>
    <property type="project" value="TreeGrafter"/>
</dbReference>
<dbReference type="GO" id="GO:0016998">
    <property type="term" value="P:cell wall macromolecule catabolic process"/>
    <property type="evidence" value="ECO:0007669"/>
    <property type="project" value="InterPro"/>
</dbReference>
<dbReference type="GO" id="GO:0042742">
    <property type="term" value="P:defense response to bacterium"/>
    <property type="evidence" value="ECO:0007669"/>
    <property type="project" value="UniProtKB-KW"/>
</dbReference>
<dbReference type="GO" id="GO:0031640">
    <property type="term" value="P:killing of cells of another organism"/>
    <property type="evidence" value="ECO:0007669"/>
    <property type="project" value="UniProtKB-KW"/>
</dbReference>
<dbReference type="GO" id="GO:0009253">
    <property type="term" value="P:peptidoglycan catabolic process"/>
    <property type="evidence" value="ECO:0007669"/>
    <property type="project" value="InterPro"/>
</dbReference>
<dbReference type="Gene3D" id="3.20.20.80">
    <property type="entry name" value="Glycosidases"/>
    <property type="match status" value="1"/>
</dbReference>
<dbReference type="InterPro" id="IPR002053">
    <property type="entry name" value="Glyco_hydro_25"/>
</dbReference>
<dbReference type="InterPro" id="IPR008270">
    <property type="entry name" value="Glyco_hydro_25_AS"/>
</dbReference>
<dbReference type="InterPro" id="IPR018077">
    <property type="entry name" value="Glyco_hydro_fam25_subgr"/>
</dbReference>
<dbReference type="InterPro" id="IPR017853">
    <property type="entry name" value="Glycoside_hydrolase_SF"/>
</dbReference>
<dbReference type="PANTHER" id="PTHR34135">
    <property type="entry name" value="LYSOZYME"/>
    <property type="match status" value="1"/>
</dbReference>
<dbReference type="PANTHER" id="PTHR34135:SF2">
    <property type="entry name" value="LYSOZYME"/>
    <property type="match status" value="1"/>
</dbReference>
<dbReference type="Pfam" id="PF01183">
    <property type="entry name" value="Glyco_hydro_25"/>
    <property type="match status" value="1"/>
</dbReference>
<dbReference type="SMART" id="SM00641">
    <property type="entry name" value="Glyco_25"/>
    <property type="match status" value="1"/>
</dbReference>
<dbReference type="SUPFAM" id="SSF51445">
    <property type="entry name" value="(Trans)glycosidases"/>
    <property type="match status" value="1"/>
</dbReference>
<dbReference type="PROSITE" id="PS00953">
    <property type="entry name" value="GLYCOSYL_HYDROL_F25_1"/>
    <property type="match status" value="1"/>
</dbReference>
<dbReference type="PROSITE" id="PS51904">
    <property type="entry name" value="GLYCOSYL_HYDROL_F25_2"/>
    <property type="match status" value="1"/>
</dbReference>
<gene>
    <name type="primary">lysA</name>
</gene>